<keyword id="KW-0025">Alternative splicing</keyword>
<keyword id="KW-0963">Cytoplasm</keyword>
<keyword id="KW-0539">Nucleus</keyword>
<keyword id="KW-1185">Reference proteome</keyword>
<keyword id="KW-0346">Stress response</keyword>
<organism>
    <name type="scientific">Mus musculus</name>
    <name type="common">Mouse</name>
    <dbReference type="NCBI Taxonomy" id="10090"/>
    <lineage>
        <taxon>Eukaryota</taxon>
        <taxon>Metazoa</taxon>
        <taxon>Chordata</taxon>
        <taxon>Craniata</taxon>
        <taxon>Vertebrata</taxon>
        <taxon>Euteleostomi</taxon>
        <taxon>Mammalia</taxon>
        <taxon>Eutheria</taxon>
        <taxon>Euarchontoglires</taxon>
        <taxon>Glires</taxon>
        <taxon>Rodentia</taxon>
        <taxon>Myomorpha</taxon>
        <taxon>Muroidea</taxon>
        <taxon>Muridae</taxon>
        <taxon>Murinae</taxon>
        <taxon>Mus</taxon>
        <taxon>Mus</taxon>
    </lineage>
</organism>
<comment type="function">
    <text evidence="1">May regulate the kinase DMPK.</text>
</comment>
<comment type="subunit">
    <text evidence="1">Interacts with DMPK; may enhance its kinase activity.</text>
</comment>
<comment type="subcellular location">
    <subcellularLocation>
        <location evidence="1">Cytoplasm</location>
    </subcellularLocation>
    <subcellularLocation>
        <location evidence="1">Nucleus</location>
    </subcellularLocation>
    <text evidence="1">Localizes to nuclear foci.</text>
</comment>
<comment type="alternative products">
    <event type="alternative splicing"/>
    <isoform>
        <id>Q99PR8-1</id>
        <name>1</name>
        <sequence type="displayed"/>
    </isoform>
    <isoform>
        <id>Q99PR8-2</id>
        <name>2</name>
        <sequence type="described" ref="VSP_010160"/>
    </isoform>
</comment>
<comment type="similarity">
    <text evidence="2">Belongs to the small heat shock protein (HSP20) family.</text>
</comment>
<sequence length="182" mass="20375">MSGRTVPHAHPATAEYEFANPSRLGEQRFGEGLLPEEILTPTLYHGYYVRPRAARAGEGARAGASELRLSEGKFQAFLDVSHFTPDEVTVRTVDNLLEVSARHPQRLDRHGFVSREFCRTYVLPADVDPWRVRAALSHDGILNLEAPRGGRHLDTEVNEVYISLLPAPPDPEEEEEIARVEP</sequence>
<feature type="chain" id="PRO_0000125934" description="Heat shock protein beta-2">
    <location>
        <begin position="1"/>
        <end position="182"/>
    </location>
</feature>
<feature type="domain" description="sHSP" evidence="2">
    <location>
        <begin position="55"/>
        <end position="163"/>
    </location>
</feature>
<feature type="splice variant" id="VSP_010160" description="In isoform 2." evidence="3">
    <location>
        <begin position="32"/>
        <end position="125"/>
    </location>
</feature>
<feature type="sequence conflict" description="In Ref. 1; AAK13576." evidence="4" ref="1">
    <original>A</original>
    <variation>T</variation>
    <location>
        <position position="54"/>
    </location>
</feature>
<proteinExistence type="evidence at protein level"/>
<evidence type="ECO:0000250" key="1"/>
<evidence type="ECO:0000255" key="2">
    <source>
        <dbReference type="PROSITE-ProRule" id="PRU00285"/>
    </source>
</evidence>
<evidence type="ECO:0000303" key="3">
    <source>
    </source>
</evidence>
<evidence type="ECO:0000305" key="4"/>
<accession>Q99PR8</accession>
<accession>E9QKE3</accession>
<accession>Q9CZC2</accession>
<reference key="1">
    <citation type="submission" date="1999-02" db="EMBL/GenBank/DDBJ databases">
        <title>Isolation of the murine HSPB2 gene.</title>
        <authorList>
            <person name="Iwaki A."/>
            <person name="Ijichi N."/>
        </authorList>
    </citation>
    <scope>NUCLEOTIDE SEQUENCE [GENOMIC DNA]</scope>
    <source>
        <strain>129/Sv</strain>
        <tissue>Liver</tissue>
    </source>
</reference>
<reference key="2">
    <citation type="journal article" date="2005" name="Science">
        <title>The transcriptional landscape of the mammalian genome.</title>
        <authorList>
            <person name="Carninci P."/>
            <person name="Kasukawa T."/>
            <person name="Katayama S."/>
            <person name="Gough J."/>
            <person name="Frith M.C."/>
            <person name="Maeda N."/>
            <person name="Oyama R."/>
            <person name="Ravasi T."/>
            <person name="Lenhard B."/>
            <person name="Wells C."/>
            <person name="Kodzius R."/>
            <person name="Shimokawa K."/>
            <person name="Bajic V.B."/>
            <person name="Brenner S.E."/>
            <person name="Batalov S."/>
            <person name="Forrest A.R."/>
            <person name="Zavolan M."/>
            <person name="Davis M.J."/>
            <person name="Wilming L.G."/>
            <person name="Aidinis V."/>
            <person name="Allen J.E."/>
            <person name="Ambesi-Impiombato A."/>
            <person name="Apweiler R."/>
            <person name="Aturaliya R.N."/>
            <person name="Bailey T.L."/>
            <person name="Bansal M."/>
            <person name="Baxter L."/>
            <person name="Beisel K.W."/>
            <person name="Bersano T."/>
            <person name="Bono H."/>
            <person name="Chalk A.M."/>
            <person name="Chiu K.P."/>
            <person name="Choudhary V."/>
            <person name="Christoffels A."/>
            <person name="Clutterbuck D.R."/>
            <person name="Crowe M.L."/>
            <person name="Dalla E."/>
            <person name="Dalrymple B.P."/>
            <person name="de Bono B."/>
            <person name="Della Gatta G."/>
            <person name="di Bernardo D."/>
            <person name="Down T."/>
            <person name="Engstrom P."/>
            <person name="Fagiolini M."/>
            <person name="Faulkner G."/>
            <person name="Fletcher C.F."/>
            <person name="Fukushima T."/>
            <person name="Furuno M."/>
            <person name="Futaki S."/>
            <person name="Gariboldi M."/>
            <person name="Georgii-Hemming P."/>
            <person name="Gingeras T.R."/>
            <person name="Gojobori T."/>
            <person name="Green R.E."/>
            <person name="Gustincich S."/>
            <person name="Harbers M."/>
            <person name="Hayashi Y."/>
            <person name="Hensch T.K."/>
            <person name="Hirokawa N."/>
            <person name="Hill D."/>
            <person name="Huminiecki L."/>
            <person name="Iacono M."/>
            <person name="Ikeo K."/>
            <person name="Iwama A."/>
            <person name="Ishikawa T."/>
            <person name="Jakt M."/>
            <person name="Kanapin A."/>
            <person name="Katoh M."/>
            <person name="Kawasawa Y."/>
            <person name="Kelso J."/>
            <person name="Kitamura H."/>
            <person name="Kitano H."/>
            <person name="Kollias G."/>
            <person name="Krishnan S.P."/>
            <person name="Kruger A."/>
            <person name="Kummerfeld S.K."/>
            <person name="Kurochkin I.V."/>
            <person name="Lareau L.F."/>
            <person name="Lazarevic D."/>
            <person name="Lipovich L."/>
            <person name="Liu J."/>
            <person name="Liuni S."/>
            <person name="McWilliam S."/>
            <person name="Madan Babu M."/>
            <person name="Madera M."/>
            <person name="Marchionni L."/>
            <person name="Matsuda H."/>
            <person name="Matsuzawa S."/>
            <person name="Miki H."/>
            <person name="Mignone F."/>
            <person name="Miyake S."/>
            <person name="Morris K."/>
            <person name="Mottagui-Tabar S."/>
            <person name="Mulder N."/>
            <person name="Nakano N."/>
            <person name="Nakauchi H."/>
            <person name="Ng P."/>
            <person name="Nilsson R."/>
            <person name="Nishiguchi S."/>
            <person name="Nishikawa S."/>
            <person name="Nori F."/>
            <person name="Ohara O."/>
            <person name="Okazaki Y."/>
            <person name="Orlando V."/>
            <person name="Pang K.C."/>
            <person name="Pavan W.J."/>
            <person name="Pavesi G."/>
            <person name="Pesole G."/>
            <person name="Petrovsky N."/>
            <person name="Piazza S."/>
            <person name="Reed J."/>
            <person name="Reid J.F."/>
            <person name="Ring B.Z."/>
            <person name="Ringwald M."/>
            <person name="Rost B."/>
            <person name="Ruan Y."/>
            <person name="Salzberg S.L."/>
            <person name="Sandelin A."/>
            <person name="Schneider C."/>
            <person name="Schoenbach C."/>
            <person name="Sekiguchi K."/>
            <person name="Semple C.A."/>
            <person name="Seno S."/>
            <person name="Sessa L."/>
            <person name="Sheng Y."/>
            <person name="Shibata Y."/>
            <person name="Shimada H."/>
            <person name="Shimada K."/>
            <person name="Silva D."/>
            <person name="Sinclair B."/>
            <person name="Sperling S."/>
            <person name="Stupka E."/>
            <person name="Sugiura K."/>
            <person name="Sultana R."/>
            <person name="Takenaka Y."/>
            <person name="Taki K."/>
            <person name="Tammoja K."/>
            <person name="Tan S.L."/>
            <person name="Tang S."/>
            <person name="Taylor M.S."/>
            <person name="Tegner J."/>
            <person name="Teichmann S.A."/>
            <person name="Ueda H.R."/>
            <person name="van Nimwegen E."/>
            <person name="Verardo R."/>
            <person name="Wei C.L."/>
            <person name="Yagi K."/>
            <person name="Yamanishi H."/>
            <person name="Zabarovsky E."/>
            <person name="Zhu S."/>
            <person name="Zimmer A."/>
            <person name="Hide W."/>
            <person name="Bult C."/>
            <person name="Grimmond S.M."/>
            <person name="Teasdale R.D."/>
            <person name="Liu E.T."/>
            <person name="Brusic V."/>
            <person name="Quackenbush J."/>
            <person name="Wahlestedt C."/>
            <person name="Mattick J.S."/>
            <person name="Hume D.A."/>
            <person name="Kai C."/>
            <person name="Sasaki D."/>
            <person name="Tomaru Y."/>
            <person name="Fukuda S."/>
            <person name="Kanamori-Katayama M."/>
            <person name="Suzuki M."/>
            <person name="Aoki J."/>
            <person name="Arakawa T."/>
            <person name="Iida J."/>
            <person name="Imamura K."/>
            <person name="Itoh M."/>
            <person name="Kato T."/>
            <person name="Kawaji H."/>
            <person name="Kawagashira N."/>
            <person name="Kawashima T."/>
            <person name="Kojima M."/>
            <person name="Kondo S."/>
            <person name="Konno H."/>
            <person name="Nakano K."/>
            <person name="Ninomiya N."/>
            <person name="Nishio T."/>
            <person name="Okada M."/>
            <person name="Plessy C."/>
            <person name="Shibata K."/>
            <person name="Shiraki T."/>
            <person name="Suzuki S."/>
            <person name="Tagami M."/>
            <person name="Waki K."/>
            <person name="Watahiki A."/>
            <person name="Okamura-Oho Y."/>
            <person name="Suzuki H."/>
            <person name="Kawai J."/>
            <person name="Hayashizaki Y."/>
        </authorList>
    </citation>
    <scope>NUCLEOTIDE SEQUENCE [LARGE SCALE MRNA] (ISOFORM 2)</scope>
    <source>
        <strain>C57BL/6J</strain>
        <tissue>Embryo</tissue>
    </source>
</reference>
<reference key="3">
    <citation type="journal article" date="2009" name="PLoS Biol.">
        <title>Lineage-specific biology revealed by a finished genome assembly of the mouse.</title>
        <authorList>
            <person name="Church D.M."/>
            <person name="Goodstadt L."/>
            <person name="Hillier L.W."/>
            <person name="Zody M.C."/>
            <person name="Goldstein S."/>
            <person name="She X."/>
            <person name="Bult C.J."/>
            <person name="Agarwala R."/>
            <person name="Cherry J.L."/>
            <person name="DiCuccio M."/>
            <person name="Hlavina W."/>
            <person name="Kapustin Y."/>
            <person name="Meric P."/>
            <person name="Maglott D."/>
            <person name="Birtle Z."/>
            <person name="Marques A.C."/>
            <person name="Graves T."/>
            <person name="Zhou S."/>
            <person name="Teague B."/>
            <person name="Potamousis K."/>
            <person name="Churas C."/>
            <person name="Place M."/>
            <person name="Herschleb J."/>
            <person name="Runnheim R."/>
            <person name="Forrest D."/>
            <person name="Amos-Landgraf J."/>
            <person name="Schwartz D.C."/>
            <person name="Cheng Z."/>
            <person name="Lindblad-Toh K."/>
            <person name="Eichler E.E."/>
            <person name="Ponting C.P."/>
        </authorList>
    </citation>
    <scope>NUCLEOTIDE SEQUENCE [LARGE SCALE GENOMIC DNA]</scope>
    <source>
        <strain>C57BL/6J</strain>
    </source>
</reference>
<reference key="4">
    <citation type="journal article" date="2010" name="Cell">
        <title>A tissue-specific atlas of mouse protein phosphorylation and expression.</title>
        <authorList>
            <person name="Huttlin E.L."/>
            <person name="Jedrychowski M.P."/>
            <person name="Elias J.E."/>
            <person name="Goswami T."/>
            <person name="Rad R."/>
            <person name="Beausoleil S.A."/>
            <person name="Villen J."/>
            <person name="Haas W."/>
            <person name="Sowa M.E."/>
            <person name="Gygi S.P."/>
        </authorList>
    </citation>
    <scope>IDENTIFICATION BY MASS SPECTROMETRY [LARGE SCALE ANALYSIS]</scope>
    <source>
        <tissue>Heart</tissue>
        <tissue>Lung</tissue>
    </source>
</reference>
<name>HSPB2_MOUSE</name>
<dbReference type="EMBL" id="AF126248">
    <property type="protein sequence ID" value="AAK13576.1"/>
    <property type="molecule type" value="Genomic_DNA"/>
</dbReference>
<dbReference type="EMBL" id="AK012780">
    <property type="protein sequence ID" value="BAB28465.1"/>
    <property type="molecule type" value="mRNA"/>
</dbReference>
<dbReference type="EMBL" id="AC113987">
    <property type="status" value="NOT_ANNOTATED_CDS"/>
    <property type="molecule type" value="Genomic_DNA"/>
</dbReference>
<dbReference type="EMBL" id="AC123614">
    <property type="status" value="NOT_ANNOTATED_CDS"/>
    <property type="molecule type" value="Genomic_DNA"/>
</dbReference>
<dbReference type="CCDS" id="CCDS23171.1">
    <molecule id="Q99PR8-1"/>
</dbReference>
<dbReference type="CCDS" id="CCDS90564.1">
    <molecule id="Q99PR8-2"/>
</dbReference>
<dbReference type="RefSeq" id="NP_001158180.1">
    <molecule id="Q99PR8-2"/>
    <property type="nucleotide sequence ID" value="NM_001164708.1"/>
</dbReference>
<dbReference type="RefSeq" id="NP_077761.3">
    <molecule id="Q99PR8-1"/>
    <property type="nucleotide sequence ID" value="NM_024441.3"/>
</dbReference>
<dbReference type="SMR" id="Q99PR8"/>
<dbReference type="BioGRID" id="213316">
    <property type="interactions" value="70"/>
</dbReference>
<dbReference type="FunCoup" id="Q99PR8">
    <property type="interactions" value="665"/>
</dbReference>
<dbReference type="IntAct" id="Q99PR8">
    <property type="interactions" value="1"/>
</dbReference>
<dbReference type="STRING" id="10090.ENSMUSP00000042374"/>
<dbReference type="PhosphoSitePlus" id="Q99PR8"/>
<dbReference type="jPOST" id="Q99PR8"/>
<dbReference type="PaxDb" id="10090-ENSMUSP00000042374"/>
<dbReference type="ProteomicsDB" id="273046">
    <molecule id="Q99PR8-1"/>
</dbReference>
<dbReference type="ProteomicsDB" id="273047">
    <molecule id="Q99PR8-2"/>
</dbReference>
<dbReference type="DNASU" id="69253"/>
<dbReference type="Ensembl" id="ENSMUST00000042790.5">
    <molecule id="Q99PR8-1"/>
    <property type="protein sequence ID" value="ENSMUSP00000042374.4"/>
    <property type="gene ID" value="ENSMUSG00000038086.5"/>
</dbReference>
<dbReference type="Ensembl" id="ENSMUST00000217159.2">
    <molecule id="Q99PR8-2"/>
    <property type="protein sequence ID" value="ENSMUSP00000148970.2"/>
    <property type="gene ID" value="ENSMUSG00000038086.5"/>
</dbReference>
<dbReference type="GeneID" id="69253"/>
<dbReference type="KEGG" id="mmu:69253"/>
<dbReference type="UCSC" id="uc009pkj.2">
    <molecule id="Q99PR8-1"/>
    <property type="organism name" value="mouse"/>
</dbReference>
<dbReference type="UCSC" id="uc009pkk.2">
    <molecule id="Q99PR8-2"/>
    <property type="organism name" value="mouse"/>
</dbReference>
<dbReference type="AGR" id="MGI:1916503"/>
<dbReference type="CTD" id="3316"/>
<dbReference type="MGI" id="MGI:1916503">
    <property type="gene designation" value="Hspb2"/>
</dbReference>
<dbReference type="VEuPathDB" id="HostDB:ENSMUSG00000038086"/>
<dbReference type="eggNOG" id="KOG3591">
    <property type="taxonomic scope" value="Eukaryota"/>
</dbReference>
<dbReference type="GeneTree" id="ENSGT00940000161288"/>
<dbReference type="HOGENOM" id="CLU_095001_1_0_1"/>
<dbReference type="InParanoid" id="Q99PR8"/>
<dbReference type="OMA" id="MSTEYEF"/>
<dbReference type="OrthoDB" id="1431247at2759"/>
<dbReference type="PhylomeDB" id="Q99PR8"/>
<dbReference type="TreeFam" id="TF105049"/>
<dbReference type="BioGRID-ORCS" id="69253">
    <property type="hits" value="0 hits in 76 CRISPR screens"/>
</dbReference>
<dbReference type="ChiTaRS" id="Hspb2">
    <property type="organism name" value="mouse"/>
</dbReference>
<dbReference type="PRO" id="PR:Q99PR8"/>
<dbReference type="Proteomes" id="UP000000589">
    <property type="component" value="Chromosome 9"/>
</dbReference>
<dbReference type="RNAct" id="Q99PR8">
    <property type="molecule type" value="protein"/>
</dbReference>
<dbReference type="Bgee" id="ENSMUSG00000038086">
    <property type="expression patterns" value="Expressed in interventricular septum and 146 other cell types or tissues"/>
</dbReference>
<dbReference type="GO" id="GO:0005737">
    <property type="term" value="C:cytoplasm"/>
    <property type="evidence" value="ECO:0000250"/>
    <property type="project" value="UniProtKB"/>
</dbReference>
<dbReference type="GO" id="GO:0005634">
    <property type="term" value="C:nucleus"/>
    <property type="evidence" value="ECO:0000250"/>
    <property type="project" value="UniProtKB"/>
</dbReference>
<dbReference type="GO" id="GO:0005212">
    <property type="term" value="F:structural constituent of eye lens"/>
    <property type="evidence" value="ECO:0007669"/>
    <property type="project" value="InterPro"/>
</dbReference>
<dbReference type="GO" id="GO:0007525">
    <property type="term" value="P:somatic muscle development"/>
    <property type="evidence" value="ECO:0000316"/>
    <property type="project" value="MGI"/>
</dbReference>
<dbReference type="FunFam" id="2.60.40.790:FF:000025">
    <property type="entry name" value="heat shock protein beta-2"/>
    <property type="match status" value="1"/>
</dbReference>
<dbReference type="Gene3D" id="2.60.40.790">
    <property type="match status" value="1"/>
</dbReference>
<dbReference type="InterPro" id="IPR002068">
    <property type="entry name" value="A-crystallin/Hsp20_dom"/>
</dbReference>
<dbReference type="InterPro" id="IPR001436">
    <property type="entry name" value="Alpha-crystallin/sHSP_animal"/>
</dbReference>
<dbReference type="InterPro" id="IPR003090">
    <property type="entry name" value="Alpha-crystallin_N"/>
</dbReference>
<dbReference type="InterPro" id="IPR008978">
    <property type="entry name" value="HSP20-like_chaperone"/>
</dbReference>
<dbReference type="PANTHER" id="PTHR45640:SF27">
    <property type="entry name" value="HEAT SHOCK PROTEIN BETA-2"/>
    <property type="match status" value="1"/>
</dbReference>
<dbReference type="PANTHER" id="PTHR45640">
    <property type="entry name" value="HEAT SHOCK PROTEIN HSP-12.2-RELATED"/>
    <property type="match status" value="1"/>
</dbReference>
<dbReference type="Pfam" id="PF00525">
    <property type="entry name" value="Crystallin"/>
    <property type="match status" value="1"/>
</dbReference>
<dbReference type="Pfam" id="PF00011">
    <property type="entry name" value="HSP20"/>
    <property type="match status" value="1"/>
</dbReference>
<dbReference type="PRINTS" id="PR00299">
    <property type="entry name" value="ACRYSTALLIN"/>
</dbReference>
<dbReference type="SUPFAM" id="SSF49764">
    <property type="entry name" value="HSP20-like chaperones"/>
    <property type="match status" value="1"/>
</dbReference>
<dbReference type="PROSITE" id="PS01031">
    <property type="entry name" value="SHSP"/>
    <property type="match status" value="1"/>
</dbReference>
<gene>
    <name type="primary">Hspb2</name>
</gene>
<protein>
    <recommendedName>
        <fullName>Heat shock protein beta-2</fullName>
        <shortName>HspB2</shortName>
    </recommendedName>
</protein>